<keyword id="KW-0007">Acetylation</keyword>
<keyword id="KW-0025">Alternative splicing</keyword>
<keyword id="KW-1003">Cell membrane</keyword>
<keyword id="KW-0175">Coiled coil</keyword>
<keyword id="KW-0963">Cytoplasm</keyword>
<keyword id="KW-0472">Membrane</keyword>
<keyword id="KW-1185">Reference proteome</keyword>
<name>TRF1B_ARATH</name>
<protein>
    <recommendedName>
        <fullName evidence="8">TNF receptor-associated factor homolog 1b</fullName>
    </recommendedName>
    <alternativeName>
        <fullName evidence="6">Protein MUTANT SNC1-ENHANCING 13</fullName>
    </alternativeName>
</protein>
<proteinExistence type="evidence at protein level"/>
<gene>
    <name evidence="7" type="primary">TRAF1B</name>
    <name evidence="6" type="synonym">MUSE13</name>
    <name evidence="10" type="ordered locus">At1g04300</name>
    <name evidence="11" type="ORF">F19P19.26</name>
</gene>
<reference key="1">
    <citation type="journal article" date="2000" name="Nature">
        <title>Sequence and analysis of chromosome 1 of the plant Arabidopsis thaliana.</title>
        <authorList>
            <person name="Theologis A."/>
            <person name="Ecker J.R."/>
            <person name="Palm C.J."/>
            <person name="Federspiel N.A."/>
            <person name="Kaul S."/>
            <person name="White O."/>
            <person name="Alonso J."/>
            <person name="Altafi H."/>
            <person name="Araujo R."/>
            <person name="Bowman C.L."/>
            <person name="Brooks S.Y."/>
            <person name="Buehler E."/>
            <person name="Chan A."/>
            <person name="Chao Q."/>
            <person name="Chen H."/>
            <person name="Cheuk R.F."/>
            <person name="Chin C.W."/>
            <person name="Chung M.K."/>
            <person name="Conn L."/>
            <person name="Conway A.B."/>
            <person name="Conway A.R."/>
            <person name="Creasy T.H."/>
            <person name="Dewar K."/>
            <person name="Dunn P."/>
            <person name="Etgu P."/>
            <person name="Feldblyum T.V."/>
            <person name="Feng J.-D."/>
            <person name="Fong B."/>
            <person name="Fujii C.Y."/>
            <person name="Gill J.E."/>
            <person name="Goldsmith A.D."/>
            <person name="Haas B."/>
            <person name="Hansen N.F."/>
            <person name="Hughes B."/>
            <person name="Huizar L."/>
            <person name="Hunter J.L."/>
            <person name="Jenkins J."/>
            <person name="Johnson-Hopson C."/>
            <person name="Khan S."/>
            <person name="Khaykin E."/>
            <person name="Kim C.J."/>
            <person name="Koo H.L."/>
            <person name="Kremenetskaia I."/>
            <person name="Kurtz D.B."/>
            <person name="Kwan A."/>
            <person name="Lam B."/>
            <person name="Langin-Hooper S."/>
            <person name="Lee A."/>
            <person name="Lee J.M."/>
            <person name="Lenz C.A."/>
            <person name="Li J.H."/>
            <person name="Li Y.-P."/>
            <person name="Lin X."/>
            <person name="Liu S.X."/>
            <person name="Liu Z.A."/>
            <person name="Luros J.S."/>
            <person name="Maiti R."/>
            <person name="Marziali A."/>
            <person name="Militscher J."/>
            <person name="Miranda M."/>
            <person name="Nguyen M."/>
            <person name="Nierman W.C."/>
            <person name="Osborne B.I."/>
            <person name="Pai G."/>
            <person name="Peterson J."/>
            <person name="Pham P.K."/>
            <person name="Rizzo M."/>
            <person name="Rooney T."/>
            <person name="Rowley D."/>
            <person name="Sakano H."/>
            <person name="Salzberg S.L."/>
            <person name="Schwartz J.R."/>
            <person name="Shinn P."/>
            <person name="Southwick A.M."/>
            <person name="Sun H."/>
            <person name="Tallon L.J."/>
            <person name="Tambunga G."/>
            <person name="Toriumi M.J."/>
            <person name="Town C.D."/>
            <person name="Utterback T."/>
            <person name="Van Aken S."/>
            <person name="Vaysberg M."/>
            <person name="Vysotskaia V.S."/>
            <person name="Walker M."/>
            <person name="Wu D."/>
            <person name="Yu G."/>
            <person name="Fraser C.M."/>
            <person name="Venter J.C."/>
            <person name="Davis R.W."/>
        </authorList>
    </citation>
    <scope>NUCLEOTIDE SEQUENCE [LARGE SCALE GENOMIC DNA]</scope>
    <source>
        <strain>cv. Columbia</strain>
    </source>
</reference>
<reference key="2">
    <citation type="journal article" date="2017" name="Plant J.">
        <title>Araport11: a complete reannotation of the Arabidopsis thaliana reference genome.</title>
        <authorList>
            <person name="Cheng C.Y."/>
            <person name="Krishnakumar V."/>
            <person name="Chan A.P."/>
            <person name="Thibaud-Nissen F."/>
            <person name="Schobel S."/>
            <person name="Town C.D."/>
        </authorList>
    </citation>
    <scope>GENOME REANNOTATION</scope>
    <source>
        <strain>cv. Columbia</strain>
    </source>
</reference>
<reference key="3">
    <citation type="submission" date="2006-07" db="EMBL/GenBank/DDBJ databases">
        <title>Large-scale analysis of RIKEN Arabidopsis full-length (RAFL) cDNAs.</title>
        <authorList>
            <person name="Totoki Y."/>
            <person name="Seki M."/>
            <person name="Ishida J."/>
            <person name="Nakajima M."/>
            <person name="Enju A."/>
            <person name="Kamiya A."/>
            <person name="Narusaka M."/>
            <person name="Shin-i T."/>
            <person name="Nakagawa M."/>
            <person name="Sakamoto N."/>
            <person name="Oishi K."/>
            <person name="Kohara Y."/>
            <person name="Kobayashi M."/>
            <person name="Toyoda A."/>
            <person name="Sakaki Y."/>
            <person name="Sakurai T."/>
            <person name="Iida K."/>
            <person name="Akiyama K."/>
            <person name="Satou M."/>
            <person name="Toyoda T."/>
            <person name="Konagaya A."/>
            <person name="Carninci P."/>
            <person name="Kawai J."/>
            <person name="Hayashizaki Y."/>
            <person name="Shinozaki K."/>
        </authorList>
    </citation>
    <scope>NUCLEOTIDE SEQUENCE [LARGE SCALE MRNA] (ISOFORM 2)</scope>
    <source>
        <strain>cv. Columbia</strain>
    </source>
</reference>
<reference key="4">
    <citation type="journal article" date="2012" name="Mol. Cell. Proteomics">
        <title>Comparative large-scale characterisation of plant vs. mammal proteins reveals similar and idiosyncratic N-alpha acetylation features.</title>
        <authorList>
            <person name="Bienvenut W.V."/>
            <person name="Sumpton D."/>
            <person name="Martinez A."/>
            <person name="Lilla S."/>
            <person name="Espagne C."/>
            <person name="Meinnel T."/>
            <person name="Giglione C."/>
        </authorList>
    </citation>
    <scope>ACETYLATION [LARGE SCALE ANALYSIS] AT ALA-2</scope>
    <scope>CLEAVAGE OF INITIATOR METHIONINE [LARGE SCALE ANALYSIS]</scope>
    <scope>IDENTIFICATION BY MASS SPECTROMETRY [LARGE SCALE ANALYSIS]</scope>
</reference>
<reference key="5">
    <citation type="journal article" date="2016" name="Cell Host Microbe">
        <title>Plant TRAF proteins regulate NLR immune receptor turnover.</title>
        <authorList>
            <person name="Huang S."/>
            <person name="Chen X."/>
            <person name="Zhong X."/>
            <person name="Li M."/>
            <person name="Ao K."/>
            <person name="Huang J."/>
            <person name="Li X."/>
        </authorList>
    </citation>
    <scope>FUNCTION</scope>
    <scope>SUBUNIT</scope>
    <scope>INTERACTION WITH SNC1; RPS2 AND CPR1/CPR30</scope>
    <scope>SUBCELLULAR LOCATION</scope>
    <scope>DISRUPTION PHENOTYPE</scope>
</reference>
<reference key="6">
    <citation type="journal article" date="2017" name="Plant Cell">
        <title>TRAF family proteins regulate autophagy dynamics by modulating AUTOPHAGY PROTEIN6 stability in Arabidopsis.</title>
        <authorList>
            <person name="Qi H."/>
            <person name="Xia F.N."/>
            <person name="Xie L.J."/>
            <person name="Yu L.J."/>
            <person name="Chen Q.F."/>
            <person name="Zhuang X.H."/>
            <person name="Wang Q."/>
            <person name="Li F."/>
            <person name="Jiang L."/>
            <person name="Xie Q."/>
            <person name="Xiao S."/>
        </authorList>
    </citation>
    <scope>FUNCTION</scope>
    <scope>INTERACTION WITH ATG6</scope>
    <scope>SUBCELLULAR LOCATION</scope>
    <scope>DISRUPTION PHENOTYPE</scope>
</reference>
<organism>
    <name type="scientific">Arabidopsis thaliana</name>
    <name type="common">Mouse-ear cress</name>
    <dbReference type="NCBI Taxonomy" id="3702"/>
    <lineage>
        <taxon>Eukaryota</taxon>
        <taxon>Viridiplantae</taxon>
        <taxon>Streptophyta</taxon>
        <taxon>Embryophyta</taxon>
        <taxon>Tracheophyta</taxon>
        <taxon>Spermatophyta</taxon>
        <taxon>Magnoliopsida</taxon>
        <taxon>eudicotyledons</taxon>
        <taxon>Gunneridae</taxon>
        <taxon>Pentapetalae</taxon>
        <taxon>rosids</taxon>
        <taxon>malvids</taxon>
        <taxon>Brassicales</taxon>
        <taxon>Brassicaceae</taxon>
        <taxon>Camelineae</taxon>
        <taxon>Arabidopsis</taxon>
    </lineage>
</organism>
<dbReference type="EMBL" id="AC000104">
    <property type="protein sequence ID" value="AAB70446.1"/>
    <property type="status" value="ALT_SEQ"/>
    <property type="molecule type" value="Genomic_DNA"/>
</dbReference>
<dbReference type="EMBL" id="CP002684">
    <property type="protein sequence ID" value="AEE27681.1"/>
    <property type="molecule type" value="Genomic_DNA"/>
</dbReference>
<dbReference type="EMBL" id="CP002684">
    <property type="protein sequence ID" value="AEE27682.1"/>
    <property type="molecule type" value="Genomic_DNA"/>
</dbReference>
<dbReference type="EMBL" id="AK229458">
    <property type="protein sequence ID" value="BAF01316.1"/>
    <property type="molecule type" value="mRNA"/>
</dbReference>
<dbReference type="PIR" id="E86174">
    <property type="entry name" value="E86174"/>
</dbReference>
<dbReference type="RefSeq" id="NP_001077454.1">
    <molecule id="A8MQL1-2"/>
    <property type="nucleotide sequence ID" value="NM_001083985.1"/>
</dbReference>
<dbReference type="RefSeq" id="NP_001077455.1">
    <molecule id="A8MQL1-1"/>
    <property type="nucleotide sequence ID" value="NM_001083986.1"/>
</dbReference>
<dbReference type="SMR" id="A8MQL1"/>
<dbReference type="FunCoup" id="A8MQL1">
    <property type="interactions" value="1392"/>
</dbReference>
<dbReference type="STRING" id="3702.A8MQL1"/>
<dbReference type="iPTMnet" id="A8MQL1"/>
<dbReference type="PaxDb" id="3702-AT1G04300.3"/>
<dbReference type="ProteomicsDB" id="228264">
    <molecule id="A8MQL1-1"/>
</dbReference>
<dbReference type="EnsemblPlants" id="AT1G04300.2">
    <molecule id="A8MQL1-2"/>
    <property type="protein sequence ID" value="AT1G04300.2"/>
    <property type="gene ID" value="AT1G04300"/>
</dbReference>
<dbReference type="EnsemblPlants" id="AT1G04300.3">
    <molecule id="A8MQL1-1"/>
    <property type="protein sequence ID" value="AT1G04300.3"/>
    <property type="gene ID" value="AT1G04300"/>
</dbReference>
<dbReference type="GeneID" id="839551"/>
<dbReference type="Gramene" id="AT1G04300.2">
    <molecule id="A8MQL1-2"/>
    <property type="protein sequence ID" value="AT1G04300.2"/>
    <property type="gene ID" value="AT1G04300"/>
</dbReference>
<dbReference type="Gramene" id="AT1G04300.3">
    <molecule id="A8MQL1-1"/>
    <property type="protein sequence ID" value="AT1G04300.3"/>
    <property type="gene ID" value="AT1G04300"/>
</dbReference>
<dbReference type="KEGG" id="ath:AT1G04300"/>
<dbReference type="Araport" id="AT1G04300"/>
<dbReference type="TAIR" id="AT1G04300">
    <property type="gene designation" value="MUSE13"/>
</dbReference>
<dbReference type="eggNOG" id="ENOG502QW6P">
    <property type="taxonomic scope" value="Eukaryota"/>
</dbReference>
<dbReference type="HOGENOM" id="CLU_005068_0_0_1"/>
<dbReference type="InParanoid" id="A8MQL1"/>
<dbReference type="PhylomeDB" id="A8MQL1"/>
<dbReference type="PRO" id="PR:A8MQL1"/>
<dbReference type="Proteomes" id="UP000006548">
    <property type="component" value="Chromosome 1"/>
</dbReference>
<dbReference type="ExpressionAtlas" id="A8MQL1">
    <property type="expression patterns" value="baseline and differential"/>
</dbReference>
<dbReference type="GO" id="GO:0005737">
    <property type="term" value="C:cytoplasm"/>
    <property type="evidence" value="ECO:0000314"/>
    <property type="project" value="TAIR"/>
</dbReference>
<dbReference type="GO" id="GO:0005829">
    <property type="term" value="C:cytosol"/>
    <property type="evidence" value="ECO:0000314"/>
    <property type="project" value="TAIR"/>
</dbReference>
<dbReference type="GO" id="GO:0005886">
    <property type="term" value="C:plasma membrane"/>
    <property type="evidence" value="ECO:0000314"/>
    <property type="project" value="TAIR"/>
</dbReference>
<dbReference type="GO" id="GO:1905037">
    <property type="term" value="P:autophagosome organization"/>
    <property type="evidence" value="ECO:0000315"/>
    <property type="project" value="TAIR"/>
</dbReference>
<dbReference type="GO" id="GO:0045087">
    <property type="term" value="P:innate immune response"/>
    <property type="evidence" value="ECO:0000316"/>
    <property type="project" value="TAIR"/>
</dbReference>
<dbReference type="CDD" id="cd00121">
    <property type="entry name" value="MATH"/>
    <property type="match status" value="1"/>
</dbReference>
<dbReference type="FunFam" id="2.60.210.10:FF:000031">
    <property type="entry name" value="TNF receptor-associated factor homolog 1b"/>
    <property type="match status" value="1"/>
</dbReference>
<dbReference type="Gene3D" id="2.60.210.10">
    <property type="entry name" value="Apoptosis, Tumor Necrosis Factor Receptor Associated Protein 2, Chain A"/>
    <property type="match status" value="1"/>
</dbReference>
<dbReference type="InterPro" id="IPR002083">
    <property type="entry name" value="MATH/TRAF_dom"/>
</dbReference>
<dbReference type="InterPro" id="IPR008974">
    <property type="entry name" value="TRAF-like"/>
</dbReference>
<dbReference type="InterPro" id="IPR055327">
    <property type="entry name" value="TRAF1A/B"/>
</dbReference>
<dbReference type="PANTHER" id="PTHR47477">
    <property type="entry name" value="TNF RECEPTOR-ASSOCIATED FACTOR HOMOLOG 1A"/>
    <property type="match status" value="1"/>
</dbReference>
<dbReference type="PANTHER" id="PTHR47477:SF5">
    <property type="entry name" value="TNF RECEPTOR-ASSOCIATED FACTOR HOMOLOG 1B"/>
    <property type="match status" value="1"/>
</dbReference>
<dbReference type="Pfam" id="PF22486">
    <property type="entry name" value="MATH_2"/>
    <property type="match status" value="1"/>
</dbReference>
<dbReference type="SMART" id="SM00061">
    <property type="entry name" value="MATH"/>
    <property type="match status" value="1"/>
</dbReference>
<dbReference type="SUPFAM" id="SSF49599">
    <property type="entry name" value="TRAF domain-like"/>
    <property type="match status" value="1"/>
</dbReference>
<dbReference type="PROSITE" id="PS50144">
    <property type="entry name" value="MATH"/>
    <property type="match status" value="1"/>
</dbReference>
<sequence>MAEAVDEDSGVGRSLEESSNGQHSQAGEALSEWRSSGQVENGTPSTSPSYWDIDDDDDYGLKPSELYGQYTWKIPKFSEITKREHRSNVFEAGGYKWYILIYPQGCDVCNHLSLFLCVANYDKLLPGSFAILEAGWSQFAQFTISVLSQDLKKSKFSDTLHRFWKKEHDWGWKKFMELPKLKDGFIDESGCLTIEAKVQVIRERVDRPFRCLDCGYRRELVRVYFQNVEQICRRFVEEKRSKLGRLIEDKARWTSFGVFWLGMDQNSRRRMCREKVDVILKGVVKHFFVEKEVSSTLVMDSLYSGLKALEGQTKNMKARSRLLDAKQLPAPIVSVDKDMFVLVDDVLLLLERAALEPLPPKDEKGRQNRTKDGNDGEEVNKEADERDERRLTELGRRTVEIFILSHIFSTKIEVAHQEAIALKRQEELIREEEEAWLAETEQRAKRGAAEREKKSKKKQAKQKRNKNKGKDKRKEEKVSFATHAKDLEENQNQNQNDEEEKDSVTEKAQSSAEKPDTLGDVSDISDSVDGSADILQPDLEDRDSSSVLWDTDALEIHPPSSEGSSRGRGISISTPNGITEGKSHSTMDDSSSTCSNDSIRSGVTNGSYQGNSLNFRNQKSPNKGKNQQVKAMTDAHSLASETDDQPSTLGTDPKGQNYSSEASNVGESDWVVVSHIQEPEGSRNRIPVGRERKTVQSIVNSVDMDRPKEKSTAVLSSPRNVAKNPSPLTQTKPEKKSISTADGIPNRKVLATGPPSSSQVVLPSDIQSQTVGLRADMQKLSAPKQPPATTISRPSSAPIIPAMRPSPITVSSSVQTTTSLPRSVSSAGRLGPDPSLHNQQTYTPQSYKNAIVGNSLGSSSSSFNHHPSSHGVVPTTLPSSSYSQAPTSSYQSSFPYSQDGLLWTGRSPSSVNMGMYNNTYSPAVTSNRSLNHMDVQIAQQQAQSMMTDEFPHLDIINDLLEDEQCSNMVYNGSIFNPQPQVFNGQYSSYHGELLSGGRTRSFGEEGLHYMARGPYGTDGMMPRQWQMTNMDLSLPAMRSNGMEDGTSSAANYHHSYFGLDASNPSFTSGINGYTEFRPSNGH</sequence>
<accession>A8MQL1</accession>
<accession>F4I479</accession>
<accession>P93826</accession>
<accession>P93827</accession>
<accession>Q0WNI3</accession>
<feature type="initiator methionine" description="Removed" evidence="12">
    <location>
        <position position="1"/>
    </location>
</feature>
<feature type="chain" id="PRO_0000442354" description="TNF receptor-associated factor homolog 1b">
    <location>
        <begin position="2"/>
        <end position="1082"/>
    </location>
</feature>
<feature type="domain" description="MATH" evidence="2">
    <location>
        <begin position="67"/>
        <end position="198"/>
    </location>
</feature>
<feature type="region of interest" description="Disordered" evidence="3">
    <location>
        <begin position="1"/>
        <end position="54"/>
    </location>
</feature>
<feature type="region of interest" description="Disordered" evidence="3">
    <location>
        <begin position="358"/>
        <end position="388"/>
    </location>
</feature>
<feature type="region of interest" description="Disordered" evidence="3">
    <location>
        <begin position="440"/>
        <end position="666"/>
    </location>
</feature>
<feature type="region of interest" description="Disordered" evidence="3">
    <location>
        <begin position="697"/>
        <end position="762"/>
    </location>
</feature>
<feature type="region of interest" description="Disordered" evidence="3">
    <location>
        <begin position="780"/>
        <end position="800"/>
    </location>
</feature>
<feature type="region of interest" description="Disordered" evidence="3">
    <location>
        <begin position="812"/>
        <end position="841"/>
    </location>
</feature>
<feature type="region of interest" description="Disordered" evidence="3">
    <location>
        <begin position="858"/>
        <end position="889"/>
    </location>
</feature>
<feature type="coiled-coil region" evidence="1">
    <location>
        <begin position="446"/>
        <end position="507"/>
    </location>
</feature>
<feature type="compositionally biased region" description="Polar residues" evidence="3">
    <location>
        <begin position="33"/>
        <end position="49"/>
    </location>
</feature>
<feature type="compositionally biased region" description="Basic and acidic residues" evidence="3">
    <location>
        <begin position="359"/>
        <end position="388"/>
    </location>
</feature>
<feature type="compositionally biased region" description="Basic and acidic residues" evidence="3">
    <location>
        <begin position="440"/>
        <end position="453"/>
    </location>
</feature>
<feature type="compositionally biased region" description="Basic residues" evidence="3">
    <location>
        <begin position="454"/>
        <end position="471"/>
    </location>
</feature>
<feature type="compositionally biased region" description="Basic and acidic residues" evidence="3">
    <location>
        <begin position="472"/>
        <end position="488"/>
    </location>
</feature>
<feature type="compositionally biased region" description="Low complexity" evidence="3">
    <location>
        <begin position="519"/>
        <end position="534"/>
    </location>
</feature>
<feature type="compositionally biased region" description="Low complexity" evidence="3">
    <location>
        <begin position="560"/>
        <end position="573"/>
    </location>
</feature>
<feature type="compositionally biased region" description="Polar residues" evidence="3">
    <location>
        <begin position="588"/>
        <end position="630"/>
    </location>
</feature>
<feature type="compositionally biased region" description="Polar residues" evidence="3">
    <location>
        <begin position="645"/>
        <end position="666"/>
    </location>
</feature>
<feature type="compositionally biased region" description="Low complexity" evidence="3">
    <location>
        <begin position="858"/>
        <end position="871"/>
    </location>
</feature>
<feature type="compositionally biased region" description="Low complexity" evidence="3">
    <location>
        <begin position="878"/>
        <end position="889"/>
    </location>
</feature>
<feature type="modified residue" description="N-acetylalanine" evidence="12">
    <location>
        <position position="2"/>
    </location>
</feature>
<feature type="splice variant" id="VSP_059231" description="In isoform 2.">
    <original>MAEAVDEDSGVGRSLEESSNGQHSQAGEALSEWRSSGQVENGTPSTSPSYWDIDDDDDYGLKPSELYGQYTWKIPKFSEITKREHRSNVFEAGGYKWYILIYPQGCDVCNHLSLFLCVANYDKLLP</original>
    <variation>MFVIISPCFSVLQIMINFFQVSIIVHLSAWSLFSLWIPSHV</variation>
    <location>
        <begin position="1"/>
        <end position="126"/>
    </location>
</feature>
<feature type="sequence conflict" description="In Ref. 3; BAF01316." evidence="8" ref="3">
    <original>D</original>
    <variation>G</variation>
    <location>
        <position position="324"/>
    </location>
</feature>
<feature type="sequence conflict" description="In Ref. 3; BAF01316." evidence="8" ref="3">
    <original>H</original>
    <variation>R</variation>
    <location>
        <position position="837"/>
    </location>
</feature>
<evidence type="ECO:0000255" key="1"/>
<evidence type="ECO:0000255" key="2">
    <source>
        <dbReference type="PROSITE-ProRule" id="PRU00129"/>
    </source>
</evidence>
<evidence type="ECO:0000256" key="3">
    <source>
        <dbReference type="SAM" id="MobiDB-lite"/>
    </source>
</evidence>
<evidence type="ECO:0000269" key="4">
    <source>
    </source>
</evidence>
<evidence type="ECO:0000269" key="5">
    <source>
    </source>
</evidence>
<evidence type="ECO:0000303" key="6">
    <source>
    </source>
</evidence>
<evidence type="ECO:0000303" key="7">
    <source>
    </source>
</evidence>
<evidence type="ECO:0000305" key="8"/>
<evidence type="ECO:0000305" key="9">
    <source>
    </source>
</evidence>
<evidence type="ECO:0000312" key="10">
    <source>
        <dbReference type="Araport" id="AT1G04300"/>
    </source>
</evidence>
<evidence type="ECO:0000312" key="11">
    <source>
        <dbReference type="EMBL" id="AAB70446.1"/>
    </source>
</evidence>
<evidence type="ECO:0007744" key="12">
    <source>
    </source>
</evidence>
<comment type="function">
    <text evidence="4 5">Functions redundantly with TRAF1A in the regulation of plant immune response. Contributes to the turnover of the nucleotide-binding domain and leucine-rich repeat-containing (NB-LRR) immune receptors SNC1 and RPS2. May associate with an E3 ubiquitin-protein ligase complex, which modulates ubiquitination and subsequent degradation of NB-LRR immune sensors to maintain their homeostasis (PubMed:26867179). Functions redundantly with TRAF1A in the regulation of autophagosome formation. Required for SINAT1- and SINAT2-mediated ubiquitination and destabilization of ATG6. Functions as a molecular adapter that helps to regulate autophagy by modulating ATG6 stability (PubMed:28351989).</text>
</comment>
<comment type="subunit">
    <text evidence="4 5">Forms homooligomers. Interacts with SNC1, RPS2 and CPR1/CPR30 (PubMed:26867179). Interacts with ATG6 (PubMed:28351989).</text>
</comment>
<comment type="subcellular location">
    <subcellularLocation>
        <location evidence="4 5">Cytoplasm</location>
    </subcellularLocation>
    <subcellularLocation>
        <location evidence="4">Cell membrane</location>
        <topology evidence="9">Peripheral membrane protein</topology>
    </subcellularLocation>
    <text evidence="4 5">Predominantly expressed in the cytoplasm (PubMed:26867179, PubMed:28351989). Associates with starvation-induced autophagosomes in continuous darkness (PubMed:28351989).</text>
</comment>
<comment type="alternative products">
    <event type="alternative splicing"/>
    <isoform>
        <id>A8MQL1-1</id>
        <name>1</name>
        <sequence type="displayed"/>
    </isoform>
    <isoform>
        <id>A8MQL1-2</id>
        <name>2</name>
        <sequence type="described" ref="VSP_059231"/>
    </isoform>
</comment>
<comment type="disruption phenotype">
    <text evidence="4">No visible phenotype under normal growth conditions, but the double mutant plants traf1a and traf1b, or muse13 and muse14 are extremely dwarf when grown at room temperature.</text>
</comment>
<comment type="sequence caution" evidence="8">
    <conflict type="erroneous gene model prediction">
        <sequence resource="EMBL-CDS" id="AAB70446"/>
    </conflict>
</comment>